<reference key="1">
    <citation type="journal article" date="2006" name="J. Bacteriol.">
        <title>Complete genome sequence of Yersinia pestis strains Antiqua and Nepal516: evidence of gene reduction in an emerging pathogen.</title>
        <authorList>
            <person name="Chain P.S.G."/>
            <person name="Hu P."/>
            <person name="Malfatti S.A."/>
            <person name="Radnedge L."/>
            <person name="Larimer F."/>
            <person name="Vergez L.M."/>
            <person name="Worsham P."/>
            <person name="Chu M.C."/>
            <person name="Andersen G.L."/>
        </authorList>
    </citation>
    <scope>NUCLEOTIDE SEQUENCE [LARGE SCALE GENOMIC DNA]</scope>
    <source>
        <strain>Antiqua</strain>
    </source>
</reference>
<comment type="function">
    <text evidence="1">Attaches a formyl group to the free amino group of methionyl-tRNA(fMet). The formyl group appears to play a dual role in the initiator identity of N-formylmethionyl-tRNA by promoting its recognition by IF2 and preventing the misappropriation of this tRNA by the elongation apparatus.</text>
</comment>
<comment type="catalytic activity">
    <reaction evidence="1">
        <text>L-methionyl-tRNA(fMet) + (6R)-10-formyltetrahydrofolate = N-formyl-L-methionyl-tRNA(fMet) + (6S)-5,6,7,8-tetrahydrofolate + H(+)</text>
        <dbReference type="Rhea" id="RHEA:24380"/>
        <dbReference type="Rhea" id="RHEA-COMP:9952"/>
        <dbReference type="Rhea" id="RHEA-COMP:9953"/>
        <dbReference type="ChEBI" id="CHEBI:15378"/>
        <dbReference type="ChEBI" id="CHEBI:57453"/>
        <dbReference type="ChEBI" id="CHEBI:78530"/>
        <dbReference type="ChEBI" id="CHEBI:78844"/>
        <dbReference type="ChEBI" id="CHEBI:195366"/>
        <dbReference type="EC" id="2.1.2.9"/>
    </reaction>
</comment>
<comment type="similarity">
    <text evidence="1">Belongs to the Fmt family.</text>
</comment>
<protein>
    <recommendedName>
        <fullName evidence="1">Methionyl-tRNA formyltransferase</fullName>
        <ecNumber evidence="1">2.1.2.9</ecNumber>
    </recommendedName>
</protein>
<dbReference type="EC" id="2.1.2.9" evidence="1"/>
<dbReference type="EMBL" id="CP000308">
    <property type="protein sequence ID" value="ABG15194.1"/>
    <property type="molecule type" value="Genomic_DNA"/>
</dbReference>
<dbReference type="RefSeq" id="WP_002209020.1">
    <property type="nucleotide sequence ID" value="NZ_CP009906.1"/>
</dbReference>
<dbReference type="SMR" id="Q1C2X8"/>
<dbReference type="GeneID" id="57974363"/>
<dbReference type="KEGG" id="ypa:YPA_3232"/>
<dbReference type="Proteomes" id="UP000001971">
    <property type="component" value="Chromosome"/>
</dbReference>
<dbReference type="GO" id="GO:0005829">
    <property type="term" value="C:cytosol"/>
    <property type="evidence" value="ECO:0007669"/>
    <property type="project" value="TreeGrafter"/>
</dbReference>
<dbReference type="GO" id="GO:0004479">
    <property type="term" value="F:methionyl-tRNA formyltransferase activity"/>
    <property type="evidence" value="ECO:0007669"/>
    <property type="project" value="UniProtKB-UniRule"/>
</dbReference>
<dbReference type="CDD" id="cd08646">
    <property type="entry name" value="FMT_core_Met-tRNA-FMT_N"/>
    <property type="match status" value="1"/>
</dbReference>
<dbReference type="CDD" id="cd08704">
    <property type="entry name" value="Met_tRNA_FMT_C"/>
    <property type="match status" value="1"/>
</dbReference>
<dbReference type="FunFam" id="3.10.25.10:FF:000001">
    <property type="entry name" value="Methionyl-tRNA formyltransferase"/>
    <property type="match status" value="1"/>
</dbReference>
<dbReference type="FunFam" id="3.40.50.12230:FF:000001">
    <property type="entry name" value="Methionyl-tRNA formyltransferase"/>
    <property type="match status" value="1"/>
</dbReference>
<dbReference type="FunFam" id="3.40.50.170:FF:000003">
    <property type="entry name" value="Methionyl-tRNA formyltransferase"/>
    <property type="match status" value="1"/>
</dbReference>
<dbReference type="Gene3D" id="3.10.25.10">
    <property type="entry name" value="Formyl transferase, C-terminal domain"/>
    <property type="match status" value="1"/>
</dbReference>
<dbReference type="Gene3D" id="3.40.50.170">
    <property type="entry name" value="Formyl transferase, N-terminal domain"/>
    <property type="match status" value="1"/>
</dbReference>
<dbReference type="HAMAP" id="MF_00182">
    <property type="entry name" value="Formyl_trans"/>
    <property type="match status" value="1"/>
</dbReference>
<dbReference type="InterPro" id="IPR005794">
    <property type="entry name" value="Fmt"/>
</dbReference>
<dbReference type="InterPro" id="IPR005793">
    <property type="entry name" value="Formyl_trans_C"/>
</dbReference>
<dbReference type="InterPro" id="IPR037022">
    <property type="entry name" value="Formyl_trans_C_sf"/>
</dbReference>
<dbReference type="InterPro" id="IPR002376">
    <property type="entry name" value="Formyl_transf_N"/>
</dbReference>
<dbReference type="InterPro" id="IPR036477">
    <property type="entry name" value="Formyl_transf_N_sf"/>
</dbReference>
<dbReference type="InterPro" id="IPR011034">
    <property type="entry name" value="Formyl_transferase-like_C_sf"/>
</dbReference>
<dbReference type="InterPro" id="IPR001555">
    <property type="entry name" value="GART_AS"/>
</dbReference>
<dbReference type="InterPro" id="IPR044135">
    <property type="entry name" value="Met-tRNA-FMT_C"/>
</dbReference>
<dbReference type="InterPro" id="IPR041711">
    <property type="entry name" value="Met-tRNA-FMT_N"/>
</dbReference>
<dbReference type="NCBIfam" id="TIGR00460">
    <property type="entry name" value="fmt"/>
    <property type="match status" value="1"/>
</dbReference>
<dbReference type="PANTHER" id="PTHR11138">
    <property type="entry name" value="METHIONYL-TRNA FORMYLTRANSFERASE"/>
    <property type="match status" value="1"/>
</dbReference>
<dbReference type="PANTHER" id="PTHR11138:SF5">
    <property type="entry name" value="METHIONYL-TRNA FORMYLTRANSFERASE, MITOCHONDRIAL"/>
    <property type="match status" value="1"/>
</dbReference>
<dbReference type="Pfam" id="PF02911">
    <property type="entry name" value="Formyl_trans_C"/>
    <property type="match status" value="1"/>
</dbReference>
<dbReference type="Pfam" id="PF00551">
    <property type="entry name" value="Formyl_trans_N"/>
    <property type="match status" value="1"/>
</dbReference>
<dbReference type="SUPFAM" id="SSF50486">
    <property type="entry name" value="FMT C-terminal domain-like"/>
    <property type="match status" value="1"/>
</dbReference>
<dbReference type="SUPFAM" id="SSF53328">
    <property type="entry name" value="Formyltransferase"/>
    <property type="match status" value="1"/>
</dbReference>
<dbReference type="PROSITE" id="PS00373">
    <property type="entry name" value="GART"/>
    <property type="match status" value="1"/>
</dbReference>
<accession>Q1C2X8</accession>
<sequence>MSDSLRIIFAGTPDFAARHLGALLSSQHKIVGVFTQPDRPAGRGNKLTPSPVKILAEHHGIPVFQPKSLRPEENQHLVADLNADIMVVVAYGLILPAAVLAMPRLGCINVHGSLLPRWRGAAPIQRSVWAGDEKTGITIMQMDIGLDTGAMLHKIECAIQPEDTSATLYDKLAQLGPQGLLITLQQLAAGTALAEVQNETQATYAEKLSKEEAKLDWTLSATQLERCIRAFNPWPVSYFIVDEQPIKVWQAQVLPAGEDAEPGTIIHADKHGIQVATADGVLNITQLQPAGKKAMSAADLLNSRREWFIPGSQLV</sequence>
<gene>
    <name evidence="1" type="primary">fmt</name>
    <name type="ordered locus">YPA_3232</name>
</gene>
<feature type="chain" id="PRO_1000020207" description="Methionyl-tRNA formyltransferase">
    <location>
        <begin position="1"/>
        <end position="315"/>
    </location>
</feature>
<feature type="binding site" evidence="1">
    <location>
        <begin position="113"/>
        <end position="116"/>
    </location>
    <ligand>
        <name>(6S)-5,6,7,8-tetrahydrofolate</name>
        <dbReference type="ChEBI" id="CHEBI:57453"/>
    </ligand>
</feature>
<evidence type="ECO:0000255" key="1">
    <source>
        <dbReference type="HAMAP-Rule" id="MF_00182"/>
    </source>
</evidence>
<proteinExistence type="inferred from homology"/>
<keyword id="KW-0648">Protein biosynthesis</keyword>
<keyword id="KW-0808">Transferase</keyword>
<name>FMT_YERPA</name>
<organism>
    <name type="scientific">Yersinia pestis bv. Antiqua (strain Antiqua)</name>
    <dbReference type="NCBI Taxonomy" id="360102"/>
    <lineage>
        <taxon>Bacteria</taxon>
        <taxon>Pseudomonadati</taxon>
        <taxon>Pseudomonadota</taxon>
        <taxon>Gammaproteobacteria</taxon>
        <taxon>Enterobacterales</taxon>
        <taxon>Yersiniaceae</taxon>
        <taxon>Yersinia</taxon>
    </lineage>
</organism>